<accession>P0DG79</accession>
<accession>Q878G8</accession>
<accession>Q8K850</accession>
<feature type="chain" id="PRO_0000411629" description="Putative gluconeogenesis factor">
    <location>
        <begin position="1"/>
        <end position="325"/>
    </location>
</feature>
<evidence type="ECO:0000255" key="1">
    <source>
        <dbReference type="HAMAP-Rule" id="MF_00973"/>
    </source>
</evidence>
<comment type="function">
    <text evidence="1">Required for morphogenesis under gluconeogenic growth conditions.</text>
</comment>
<comment type="subcellular location">
    <subcellularLocation>
        <location evidence="1">Cytoplasm</location>
    </subcellularLocation>
</comment>
<comment type="similarity">
    <text evidence="1">Belongs to the gluconeogenesis factor family.</text>
</comment>
<reference key="1">
    <citation type="journal article" date="2003" name="Genome Res.">
        <title>Genome sequence of an M3 strain of Streptococcus pyogenes reveals a large-scale genomic rearrangement in invasive strains and new insights into phage evolution.</title>
        <authorList>
            <person name="Nakagawa I."/>
            <person name="Kurokawa K."/>
            <person name="Yamashita A."/>
            <person name="Nakata M."/>
            <person name="Tomiyasu Y."/>
            <person name="Okahashi N."/>
            <person name="Kawabata S."/>
            <person name="Yamazaki K."/>
            <person name="Shiba T."/>
            <person name="Yasunaga T."/>
            <person name="Hayashi H."/>
            <person name="Hattori M."/>
            <person name="Hamada S."/>
        </authorList>
    </citation>
    <scope>NUCLEOTIDE SEQUENCE [LARGE SCALE GENOMIC DNA]</scope>
    <source>
        <strain>SSI-1</strain>
    </source>
</reference>
<keyword id="KW-0963">Cytoplasm</keyword>
<gene>
    <name type="ordered locus">SPs1392</name>
</gene>
<sequence>MKNPKMTVIGGGTGISIILKSLRNEAVDITAVVTVADDGGSSGELRNAMQLAPPGDLRNVLLAMSDMPKFYERVFQYRFNESDGALAGHPLGNLIIAGISEMQGSTYNAIQILTKFFHITGKIYPSSEQALTLHAVFKDGHEVAGESSIAKYQGMIDHVYVTNTYNDQKPQASRKVVEAILESDMIVLGPGSLFTSILPNLVIPEIKEALRQTKAEVVYICNIMTQYGETEQFSDADHVAVLNQHLGRDLIDTVLVNVAKVPQAYMNSNKFDEYLVQVDHDFAGLCRAAKRVISSYFLRLENGGAFHDGNLVVEELMNLVRIVKQ</sequence>
<organism>
    <name type="scientific">Streptococcus pyogenes serotype M3 (strain SSI-1)</name>
    <dbReference type="NCBI Taxonomy" id="193567"/>
    <lineage>
        <taxon>Bacteria</taxon>
        <taxon>Bacillati</taxon>
        <taxon>Bacillota</taxon>
        <taxon>Bacilli</taxon>
        <taxon>Lactobacillales</taxon>
        <taxon>Streptococcaceae</taxon>
        <taxon>Streptococcus</taxon>
    </lineage>
</organism>
<proteinExistence type="inferred from homology"/>
<protein>
    <recommendedName>
        <fullName evidence="1">Putative gluconeogenesis factor</fullName>
    </recommendedName>
</protein>
<dbReference type="EMBL" id="BA000034">
    <property type="protein sequence ID" value="BAC64487.1"/>
    <property type="molecule type" value="Genomic_DNA"/>
</dbReference>
<dbReference type="RefSeq" id="WP_011017561.1">
    <property type="nucleotide sequence ID" value="NC_004606.1"/>
</dbReference>
<dbReference type="SMR" id="P0DG79"/>
<dbReference type="KEGG" id="sps:SPs1392"/>
<dbReference type="HOGENOM" id="CLU_044041_0_1_9"/>
<dbReference type="GO" id="GO:0005737">
    <property type="term" value="C:cytoplasm"/>
    <property type="evidence" value="ECO:0007669"/>
    <property type="project" value="UniProtKB-SubCell"/>
</dbReference>
<dbReference type="GO" id="GO:0043743">
    <property type="term" value="F:LPPG:FO 2-phospho-L-lactate transferase activity"/>
    <property type="evidence" value="ECO:0007669"/>
    <property type="project" value="InterPro"/>
</dbReference>
<dbReference type="GO" id="GO:0008360">
    <property type="term" value="P:regulation of cell shape"/>
    <property type="evidence" value="ECO:0007669"/>
    <property type="project" value="UniProtKB-UniRule"/>
</dbReference>
<dbReference type="CDD" id="cd07044">
    <property type="entry name" value="CofD_YvcK"/>
    <property type="match status" value="1"/>
</dbReference>
<dbReference type="Gene3D" id="3.40.50.10680">
    <property type="entry name" value="CofD-like domains"/>
    <property type="match status" value="1"/>
</dbReference>
<dbReference type="HAMAP" id="MF_00973">
    <property type="entry name" value="Gluconeogen_factor"/>
    <property type="match status" value="1"/>
</dbReference>
<dbReference type="InterPro" id="IPR002882">
    <property type="entry name" value="CofD"/>
</dbReference>
<dbReference type="InterPro" id="IPR038136">
    <property type="entry name" value="CofD-like_dom_sf"/>
</dbReference>
<dbReference type="InterPro" id="IPR010119">
    <property type="entry name" value="Gluconeogen_factor"/>
</dbReference>
<dbReference type="NCBIfam" id="TIGR01826">
    <property type="entry name" value="CofD_related"/>
    <property type="match status" value="1"/>
</dbReference>
<dbReference type="PANTHER" id="PTHR30135:SF3">
    <property type="entry name" value="GLUCONEOGENESIS FACTOR-RELATED"/>
    <property type="match status" value="1"/>
</dbReference>
<dbReference type="PANTHER" id="PTHR30135">
    <property type="entry name" value="UNCHARACTERIZED PROTEIN YVCK-RELATED"/>
    <property type="match status" value="1"/>
</dbReference>
<dbReference type="Pfam" id="PF01933">
    <property type="entry name" value="CofD"/>
    <property type="match status" value="1"/>
</dbReference>
<dbReference type="SUPFAM" id="SSF142338">
    <property type="entry name" value="CofD-like"/>
    <property type="match status" value="1"/>
</dbReference>
<name>GNGF_STRPQ</name>